<comment type="function">
    <text evidence="1">One of several proteins that assist in the late maturation steps of the functional core of the 30S ribosomal subunit. Associates with free 30S ribosomal subunits (but not with 30S subunits that are part of 70S ribosomes or polysomes). Required for efficient processing of 16S rRNA. May interact with the 5'-terminal helix region of 16S rRNA.</text>
</comment>
<comment type="subunit">
    <text evidence="1">Monomer. Binds 30S ribosomal subunits, but not 50S ribosomal subunits or 70S ribosomes.</text>
</comment>
<comment type="subcellular location">
    <subcellularLocation>
        <location evidence="1">Cytoplasm</location>
    </subcellularLocation>
</comment>
<comment type="similarity">
    <text evidence="1">Belongs to the RbfA family.</text>
</comment>
<accession>B3QQI1</accession>
<dbReference type="EMBL" id="CP001099">
    <property type="protein sequence ID" value="ACF12184.1"/>
    <property type="molecule type" value="Genomic_DNA"/>
</dbReference>
<dbReference type="RefSeq" id="WP_012503017.1">
    <property type="nucleotide sequence ID" value="NC_011027.1"/>
</dbReference>
<dbReference type="SMR" id="B3QQI1"/>
<dbReference type="STRING" id="517417.Cpar_1792"/>
<dbReference type="KEGG" id="cpc:Cpar_1792"/>
<dbReference type="eggNOG" id="COG0858">
    <property type="taxonomic scope" value="Bacteria"/>
</dbReference>
<dbReference type="HOGENOM" id="CLU_089475_4_0_10"/>
<dbReference type="OrthoDB" id="9811910at2"/>
<dbReference type="Proteomes" id="UP000008811">
    <property type="component" value="Chromosome"/>
</dbReference>
<dbReference type="GO" id="GO:0005829">
    <property type="term" value="C:cytosol"/>
    <property type="evidence" value="ECO:0007669"/>
    <property type="project" value="TreeGrafter"/>
</dbReference>
<dbReference type="GO" id="GO:0043024">
    <property type="term" value="F:ribosomal small subunit binding"/>
    <property type="evidence" value="ECO:0007669"/>
    <property type="project" value="TreeGrafter"/>
</dbReference>
<dbReference type="GO" id="GO:0030490">
    <property type="term" value="P:maturation of SSU-rRNA"/>
    <property type="evidence" value="ECO:0007669"/>
    <property type="project" value="UniProtKB-UniRule"/>
</dbReference>
<dbReference type="Gene3D" id="3.30.300.20">
    <property type="match status" value="1"/>
</dbReference>
<dbReference type="HAMAP" id="MF_00003">
    <property type="entry name" value="RbfA"/>
    <property type="match status" value="1"/>
</dbReference>
<dbReference type="InterPro" id="IPR015946">
    <property type="entry name" value="KH_dom-like_a/b"/>
</dbReference>
<dbReference type="InterPro" id="IPR000238">
    <property type="entry name" value="RbfA"/>
</dbReference>
<dbReference type="InterPro" id="IPR023799">
    <property type="entry name" value="RbfA_dom_sf"/>
</dbReference>
<dbReference type="NCBIfam" id="TIGR00082">
    <property type="entry name" value="rbfA"/>
    <property type="match status" value="1"/>
</dbReference>
<dbReference type="PANTHER" id="PTHR33515">
    <property type="entry name" value="RIBOSOME-BINDING FACTOR A, CHLOROPLASTIC-RELATED"/>
    <property type="match status" value="1"/>
</dbReference>
<dbReference type="PANTHER" id="PTHR33515:SF1">
    <property type="entry name" value="RIBOSOME-BINDING FACTOR A, CHLOROPLASTIC-RELATED"/>
    <property type="match status" value="1"/>
</dbReference>
<dbReference type="Pfam" id="PF02033">
    <property type="entry name" value="RBFA"/>
    <property type="match status" value="1"/>
</dbReference>
<dbReference type="SUPFAM" id="SSF89919">
    <property type="entry name" value="Ribosome-binding factor A, RbfA"/>
    <property type="match status" value="1"/>
</dbReference>
<reference key="1">
    <citation type="submission" date="2008-06" db="EMBL/GenBank/DDBJ databases">
        <title>Complete sequence of Chlorobaculum parvum NCIB 8327.</title>
        <authorList>
            <consortium name="US DOE Joint Genome Institute"/>
            <person name="Lucas S."/>
            <person name="Copeland A."/>
            <person name="Lapidus A."/>
            <person name="Glavina del Rio T."/>
            <person name="Dalin E."/>
            <person name="Tice H."/>
            <person name="Bruce D."/>
            <person name="Goodwin L."/>
            <person name="Pitluck S."/>
            <person name="Schmutz J."/>
            <person name="Larimer F."/>
            <person name="Land M."/>
            <person name="Hauser L."/>
            <person name="Kyrpides N."/>
            <person name="Mikhailova N."/>
            <person name="Zhao F."/>
            <person name="Li T."/>
            <person name="Liu Z."/>
            <person name="Overmann J."/>
            <person name="Bryant D.A."/>
            <person name="Richardson P."/>
        </authorList>
    </citation>
    <scope>NUCLEOTIDE SEQUENCE [LARGE SCALE GENOMIC DNA]</scope>
    <source>
        <strain>DSM 263 / NCIMB 8327</strain>
    </source>
</reference>
<sequence length="120" mass="13829">MSIRTEKVASLLQRELSAIFEKELPRSGPLATVTEVKVTADLGIARVYVSIIGSEAQRAELMEFLHTETKALRKILSSKIRNQFRRIPELEFYEDRLFEQANRIEELLKSVRRGPAEEQL</sequence>
<evidence type="ECO:0000255" key="1">
    <source>
        <dbReference type="HAMAP-Rule" id="MF_00003"/>
    </source>
</evidence>
<protein>
    <recommendedName>
        <fullName evidence="1">Ribosome-binding factor A</fullName>
    </recommendedName>
</protein>
<gene>
    <name evidence="1" type="primary">rbfA</name>
    <name type="ordered locus">Cpar_1792</name>
</gene>
<proteinExistence type="inferred from homology"/>
<keyword id="KW-0963">Cytoplasm</keyword>
<keyword id="KW-0690">Ribosome biogenesis</keyword>
<organism>
    <name type="scientific">Chlorobaculum parvum (strain DSM 263 / NCIMB 8327)</name>
    <name type="common">Chlorobium vibrioforme subsp. thiosulfatophilum</name>
    <dbReference type="NCBI Taxonomy" id="517417"/>
    <lineage>
        <taxon>Bacteria</taxon>
        <taxon>Pseudomonadati</taxon>
        <taxon>Chlorobiota</taxon>
        <taxon>Chlorobiia</taxon>
        <taxon>Chlorobiales</taxon>
        <taxon>Chlorobiaceae</taxon>
        <taxon>Chlorobaculum</taxon>
    </lineage>
</organism>
<name>RBFA_CHLP8</name>
<feature type="chain" id="PRO_1000088869" description="Ribosome-binding factor A">
    <location>
        <begin position="1"/>
        <end position="120"/>
    </location>
</feature>